<evidence type="ECO:0000255" key="1">
    <source>
        <dbReference type="HAMAP-Rule" id="MF_01345"/>
    </source>
</evidence>
<evidence type="ECO:0000305" key="2"/>
<gene>
    <name evidence="1" type="primary">rpsQ</name>
    <name type="ordered locus">SpyM3_0049</name>
</gene>
<proteinExistence type="inferred from homology"/>
<sequence>MERNQRKTLYGRVVSDKMDKTITVVVETKRNHPVYGKRINYSKKYKAHDENNVAKEGDIVRIMETRPLSATKRFRLVEVVEKAVII</sequence>
<keyword id="KW-0687">Ribonucleoprotein</keyword>
<keyword id="KW-0689">Ribosomal protein</keyword>
<keyword id="KW-0694">RNA-binding</keyword>
<keyword id="KW-0699">rRNA-binding</keyword>
<protein>
    <recommendedName>
        <fullName evidence="1">Small ribosomal subunit protein uS17</fullName>
    </recommendedName>
    <alternativeName>
        <fullName evidence="2">30S ribosomal protein S17</fullName>
    </alternativeName>
</protein>
<dbReference type="EMBL" id="AE014074">
    <property type="protein sequence ID" value="AAM78656.1"/>
    <property type="molecule type" value="Genomic_DNA"/>
</dbReference>
<dbReference type="RefSeq" id="WP_000440811.1">
    <property type="nucleotide sequence ID" value="NC_004070.1"/>
</dbReference>
<dbReference type="SMR" id="P0DE78"/>
<dbReference type="GeneID" id="69900035"/>
<dbReference type="KEGG" id="spg:SpyM3_0049"/>
<dbReference type="HOGENOM" id="CLU_073626_1_0_9"/>
<dbReference type="Proteomes" id="UP000000564">
    <property type="component" value="Chromosome"/>
</dbReference>
<dbReference type="GO" id="GO:0022627">
    <property type="term" value="C:cytosolic small ribosomal subunit"/>
    <property type="evidence" value="ECO:0007669"/>
    <property type="project" value="TreeGrafter"/>
</dbReference>
<dbReference type="GO" id="GO:0019843">
    <property type="term" value="F:rRNA binding"/>
    <property type="evidence" value="ECO:0007669"/>
    <property type="project" value="UniProtKB-UniRule"/>
</dbReference>
<dbReference type="GO" id="GO:0003735">
    <property type="term" value="F:structural constituent of ribosome"/>
    <property type="evidence" value="ECO:0007669"/>
    <property type="project" value="InterPro"/>
</dbReference>
<dbReference type="GO" id="GO:0006412">
    <property type="term" value="P:translation"/>
    <property type="evidence" value="ECO:0007669"/>
    <property type="project" value="UniProtKB-UniRule"/>
</dbReference>
<dbReference type="CDD" id="cd00364">
    <property type="entry name" value="Ribosomal_uS17"/>
    <property type="match status" value="1"/>
</dbReference>
<dbReference type="FunFam" id="2.40.50.140:FF:000026">
    <property type="entry name" value="30S ribosomal protein S17"/>
    <property type="match status" value="1"/>
</dbReference>
<dbReference type="Gene3D" id="2.40.50.140">
    <property type="entry name" value="Nucleic acid-binding proteins"/>
    <property type="match status" value="1"/>
</dbReference>
<dbReference type="HAMAP" id="MF_01345_B">
    <property type="entry name" value="Ribosomal_uS17_B"/>
    <property type="match status" value="1"/>
</dbReference>
<dbReference type="InterPro" id="IPR012340">
    <property type="entry name" value="NA-bd_OB-fold"/>
</dbReference>
<dbReference type="InterPro" id="IPR000266">
    <property type="entry name" value="Ribosomal_uS17"/>
</dbReference>
<dbReference type="InterPro" id="IPR019984">
    <property type="entry name" value="Ribosomal_uS17_bact/chlr"/>
</dbReference>
<dbReference type="InterPro" id="IPR019979">
    <property type="entry name" value="Ribosomal_uS17_CS"/>
</dbReference>
<dbReference type="NCBIfam" id="NF004123">
    <property type="entry name" value="PRK05610.1"/>
    <property type="match status" value="1"/>
</dbReference>
<dbReference type="NCBIfam" id="TIGR03635">
    <property type="entry name" value="uS17_bact"/>
    <property type="match status" value="1"/>
</dbReference>
<dbReference type="PANTHER" id="PTHR10744">
    <property type="entry name" value="40S RIBOSOMAL PROTEIN S11 FAMILY MEMBER"/>
    <property type="match status" value="1"/>
</dbReference>
<dbReference type="PANTHER" id="PTHR10744:SF1">
    <property type="entry name" value="SMALL RIBOSOMAL SUBUNIT PROTEIN US17M"/>
    <property type="match status" value="1"/>
</dbReference>
<dbReference type="Pfam" id="PF00366">
    <property type="entry name" value="Ribosomal_S17"/>
    <property type="match status" value="1"/>
</dbReference>
<dbReference type="PRINTS" id="PR00973">
    <property type="entry name" value="RIBOSOMALS17"/>
</dbReference>
<dbReference type="SUPFAM" id="SSF50249">
    <property type="entry name" value="Nucleic acid-binding proteins"/>
    <property type="match status" value="1"/>
</dbReference>
<dbReference type="PROSITE" id="PS00056">
    <property type="entry name" value="RIBOSOMAL_S17"/>
    <property type="match status" value="1"/>
</dbReference>
<name>RS17_STRP3</name>
<accession>P0DE78</accession>
<accession>Q79YR6</accession>
<accession>Q7CFL1</accession>
<comment type="function">
    <text evidence="1">One of the primary rRNA binding proteins, it binds specifically to the 5'-end of 16S ribosomal RNA.</text>
</comment>
<comment type="subunit">
    <text evidence="1">Part of the 30S ribosomal subunit.</text>
</comment>
<comment type="similarity">
    <text evidence="1">Belongs to the universal ribosomal protein uS17 family.</text>
</comment>
<feature type="chain" id="PRO_0000233579" description="Small ribosomal subunit protein uS17">
    <location>
        <begin position="1"/>
        <end position="86"/>
    </location>
</feature>
<organism>
    <name type="scientific">Streptococcus pyogenes serotype M3 (strain ATCC BAA-595 / MGAS315)</name>
    <dbReference type="NCBI Taxonomy" id="198466"/>
    <lineage>
        <taxon>Bacteria</taxon>
        <taxon>Bacillati</taxon>
        <taxon>Bacillota</taxon>
        <taxon>Bacilli</taxon>
        <taxon>Lactobacillales</taxon>
        <taxon>Streptococcaceae</taxon>
        <taxon>Streptococcus</taxon>
    </lineage>
</organism>
<reference key="1">
    <citation type="journal article" date="2002" name="Proc. Natl. Acad. Sci. U.S.A.">
        <title>Genome sequence of a serotype M3 strain of group A Streptococcus: phage-encoded toxins, the high-virulence phenotype, and clone emergence.</title>
        <authorList>
            <person name="Beres S.B."/>
            <person name="Sylva G.L."/>
            <person name="Barbian K.D."/>
            <person name="Lei B."/>
            <person name="Hoff J.S."/>
            <person name="Mammarella N.D."/>
            <person name="Liu M.-Y."/>
            <person name="Smoot J.C."/>
            <person name="Porcella S.F."/>
            <person name="Parkins L.D."/>
            <person name="Campbell D.S."/>
            <person name="Smith T.M."/>
            <person name="McCormick J.K."/>
            <person name="Leung D.Y.M."/>
            <person name="Schlievert P.M."/>
            <person name="Musser J.M."/>
        </authorList>
    </citation>
    <scope>NUCLEOTIDE SEQUENCE [LARGE SCALE GENOMIC DNA]</scope>
    <source>
        <strain>ATCC BAA-595 / MGAS315</strain>
    </source>
</reference>